<evidence type="ECO:0000255" key="1">
    <source>
        <dbReference type="PROSITE-ProRule" id="PRU00358"/>
    </source>
</evidence>
<evidence type="ECO:0000256" key="2">
    <source>
        <dbReference type="SAM" id="MobiDB-lite"/>
    </source>
</evidence>
<evidence type="ECO:0000305" key="3"/>
<organism>
    <name type="scientific">Arabidopsis thaliana</name>
    <name type="common">Mouse-ear cress</name>
    <dbReference type="NCBI Taxonomy" id="3702"/>
    <lineage>
        <taxon>Eukaryota</taxon>
        <taxon>Viridiplantae</taxon>
        <taxon>Streptophyta</taxon>
        <taxon>Embryophyta</taxon>
        <taxon>Tracheophyta</taxon>
        <taxon>Spermatophyta</taxon>
        <taxon>Magnoliopsida</taxon>
        <taxon>eudicotyledons</taxon>
        <taxon>Gunneridae</taxon>
        <taxon>Pentapetalae</taxon>
        <taxon>rosids</taxon>
        <taxon>malvids</taxon>
        <taxon>Brassicales</taxon>
        <taxon>Brassicaceae</taxon>
        <taxon>Camelineae</taxon>
        <taxon>Arabidopsis</taxon>
    </lineage>
</organism>
<sequence length="415" mass="47188">MMMTQRISPSNKRRRVSFVRDFPQFSVKDESDIGGDDVATIKENLDGKEDSNCVGVAYRDHHRPKEESFDSIMKKAGFNVANGNLGNGKFPPSKRNVPLPCEGKVQPLSVEEGIKLMAYESQRRRCFGKPLVSTKVVQKHRYSPAKKKLSNATALRVRHSPMKKLSNASRLRANAHRPTQHKDERRSGVLSVIQRNRLSKDLTPRQKVQEVLRIFTLVFDELDRNKAARRGGSETAKSRIDYQTWTILREMGMQVNSQKRIGSVPGIKVGDKIQFKAALSVIGLHFGIMSGIDYMYKGNKEVATSIVSSEGNDYGDRFINDVMIYCGQGGNMRSKDHKAIKDQKLVGGNLALANSIKEKTPVRVIRGERRLDNRGKDYVYDGLYRVEKYWEERGPQGNILFKFKLRRTCQPYVDF</sequence>
<gene>
    <name type="ordered locus">At5g47160</name>
    <name type="ORF">MQL5.1</name>
</gene>
<comment type="subcellular location">
    <subcellularLocation>
        <location evidence="1">Nucleus</location>
    </subcellularLocation>
</comment>
<comment type="sequence caution" evidence="3">
    <conflict type="erroneous termination">
        <sequence resource="EMBL-CDS" id="ABK28748"/>
    </conflict>
    <text>Extended C-terminus.</text>
</comment>
<protein>
    <recommendedName>
        <fullName>YDG domain-containing protein At5g47160</fullName>
    </recommendedName>
</protein>
<keyword id="KW-0539">Nucleus</keyword>
<keyword id="KW-1185">Reference proteome</keyword>
<dbReference type="EMBL" id="AB018117">
    <property type="protein sequence ID" value="BAA97149.1"/>
    <property type="molecule type" value="Genomic_DNA"/>
</dbReference>
<dbReference type="EMBL" id="CP002688">
    <property type="protein sequence ID" value="AED95477.1"/>
    <property type="molecule type" value="Genomic_DNA"/>
</dbReference>
<dbReference type="EMBL" id="CP002688">
    <property type="protein sequence ID" value="ANM68749.1"/>
    <property type="molecule type" value="Genomic_DNA"/>
</dbReference>
<dbReference type="EMBL" id="CP002688">
    <property type="protein sequence ID" value="ANM68750.1"/>
    <property type="molecule type" value="Genomic_DNA"/>
</dbReference>
<dbReference type="EMBL" id="DQ447048">
    <property type="protein sequence ID" value="ABE66230.1"/>
    <property type="molecule type" value="mRNA"/>
</dbReference>
<dbReference type="EMBL" id="DQ653354">
    <property type="protein sequence ID" value="ABK28748.1"/>
    <property type="status" value="ALT_SEQ"/>
    <property type="molecule type" value="mRNA"/>
</dbReference>
<dbReference type="RefSeq" id="NP_001318752.1">
    <property type="nucleotide sequence ID" value="NM_001344711.1"/>
</dbReference>
<dbReference type="RefSeq" id="NP_001330473.1">
    <property type="nucleotide sequence ID" value="NM_001344712.1"/>
</dbReference>
<dbReference type="RefSeq" id="NP_199527.1">
    <property type="nucleotide sequence ID" value="NM_124087.2"/>
</dbReference>
<dbReference type="SMR" id="Q9LVU3"/>
<dbReference type="STRING" id="3702.Q9LVU3"/>
<dbReference type="PaxDb" id="3702-AT5G47160.1"/>
<dbReference type="EnsemblPlants" id="AT5G47160.1">
    <property type="protein sequence ID" value="AT5G47160.1"/>
    <property type="gene ID" value="AT5G47160"/>
</dbReference>
<dbReference type="EnsemblPlants" id="AT5G47160.2">
    <property type="protein sequence ID" value="AT5G47160.2"/>
    <property type="gene ID" value="AT5G47160"/>
</dbReference>
<dbReference type="EnsemblPlants" id="AT5G47160.3">
    <property type="protein sequence ID" value="AT5G47160.3"/>
    <property type="gene ID" value="AT5G47160"/>
</dbReference>
<dbReference type="GeneID" id="834762"/>
<dbReference type="Gramene" id="AT5G47160.1">
    <property type="protein sequence ID" value="AT5G47160.1"/>
    <property type="gene ID" value="AT5G47160"/>
</dbReference>
<dbReference type="Gramene" id="AT5G47160.2">
    <property type="protein sequence ID" value="AT5G47160.2"/>
    <property type="gene ID" value="AT5G47160"/>
</dbReference>
<dbReference type="Gramene" id="AT5G47160.3">
    <property type="protein sequence ID" value="AT5G47160.3"/>
    <property type="gene ID" value="AT5G47160"/>
</dbReference>
<dbReference type="KEGG" id="ath:AT5G47160"/>
<dbReference type="Araport" id="AT5G47160"/>
<dbReference type="TAIR" id="AT5G47160"/>
<dbReference type="eggNOG" id="ENOG502S1J4">
    <property type="taxonomic scope" value="Eukaryota"/>
</dbReference>
<dbReference type="HOGENOM" id="CLU_055030_0_0_1"/>
<dbReference type="InParanoid" id="Q9LVU3"/>
<dbReference type="OMA" id="ETRHEPS"/>
<dbReference type="PhylomeDB" id="Q9LVU3"/>
<dbReference type="PRO" id="PR:Q9LVU3"/>
<dbReference type="Proteomes" id="UP000006548">
    <property type="component" value="Chromosome 5"/>
</dbReference>
<dbReference type="ExpressionAtlas" id="Q9LVU3">
    <property type="expression patterns" value="baseline and differential"/>
</dbReference>
<dbReference type="GO" id="GO:0005634">
    <property type="term" value="C:nucleus"/>
    <property type="evidence" value="ECO:0007669"/>
    <property type="project" value="UniProtKB-SubCell"/>
</dbReference>
<dbReference type="Gene3D" id="2.30.280.10">
    <property type="entry name" value="SRA-YDG"/>
    <property type="match status" value="1"/>
</dbReference>
<dbReference type="InterPro" id="IPR051357">
    <property type="entry name" value="H3K9_HMTase_SUVAR3-9"/>
</dbReference>
<dbReference type="InterPro" id="IPR015947">
    <property type="entry name" value="PUA-like_sf"/>
</dbReference>
<dbReference type="InterPro" id="IPR036987">
    <property type="entry name" value="SRA-YDG_sf"/>
</dbReference>
<dbReference type="InterPro" id="IPR003105">
    <property type="entry name" value="SRA_YDG"/>
</dbReference>
<dbReference type="PANTHER" id="PTHR45660">
    <property type="entry name" value="HISTONE-LYSINE N-METHYLTRANSFERASE SETMAR"/>
    <property type="match status" value="1"/>
</dbReference>
<dbReference type="PANTHER" id="PTHR45660:SF23">
    <property type="entry name" value="YDG DOMAIN-CONTAINING PROTEIN"/>
    <property type="match status" value="1"/>
</dbReference>
<dbReference type="Pfam" id="PF02182">
    <property type="entry name" value="SAD_SRA"/>
    <property type="match status" value="1"/>
</dbReference>
<dbReference type="SMART" id="SM00466">
    <property type="entry name" value="SRA"/>
    <property type="match status" value="1"/>
</dbReference>
<dbReference type="SUPFAM" id="SSF88697">
    <property type="entry name" value="PUA domain-like"/>
    <property type="match status" value="1"/>
</dbReference>
<dbReference type="PROSITE" id="PS51015">
    <property type="entry name" value="YDG"/>
    <property type="match status" value="1"/>
</dbReference>
<reference key="1">
    <citation type="journal article" date="2000" name="DNA Res.">
        <title>Structural analysis of Arabidopsis thaliana chromosome 5. X. Sequence features of the regions of 3,076,755 bp covered by sixty P1 and TAC clones.</title>
        <authorList>
            <person name="Sato S."/>
            <person name="Nakamura Y."/>
            <person name="Kaneko T."/>
            <person name="Katoh T."/>
            <person name="Asamizu E."/>
            <person name="Kotani H."/>
            <person name="Tabata S."/>
        </authorList>
    </citation>
    <scope>NUCLEOTIDE SEQUENCE [LARGE SCALE GENOMIC DNA]</scope>
    <source>
        <strain>cv. Columbia</strain>
    </source>
</reference>
<reference key="2">
    <citation type="journal article" date="2017" name="Plant J.">
        <title>Araport11: a complete reannotation of the Arabidopsis thaliana reference genome.</title>
        <authorList>
            <person name="Cheng C.Y."/>
            <person name="Krishnakumar V."/>
            <person name="Chan A.P."/>
            <person name="Thibaud-Nissen F."/>
            <person name="Schobel S."/>
            <person name="Town C.D."/>
        </authorList>
    </citation>
    <scope>GENOME REANNOTATION</scope>
    <source>
        <strain>cv. Columbia</strain>
    </source>
</reference>
<reference key="3">
    <citation type="journal article" date="2006" name="Plant Biotechnol. J.">
        <title>Simultaneous high-throughput recombinational cloning of open reading frames in closed and open configurations.</title>
        <authorList>
            <person name="Underwood B.A."/>
            <person name="Vanderhaeghen R."/>
            <person name="Whitford R."/>
            <person name="Town C.D."/>
            <person name="Hilson P."/>
        </authorList>
    </citation>
    <scope>NUCLEOTIDE SEQUENCE [LARGE SCALE MRNA]</scope>
    <source>
        <strain>cv. Columbia</strain>
    </source>
</reference>
<name>YDG2_ARATH</name>
<proteinExistence type="evidence at transcript level"/>
<feature type="chain" id="PRO_0000396832" description="YDG domain-containing protein At5g47160">
    <location>
        <begin position="1"/>
        <end position="415"/>
    </location>
</feature>
<feature type="domain" description="YDG" evidence="1">
    <location>
        <begin position="262"/>
        <end position="407"/>
    </location>
</feature>
<feature type="region of interest" description="Disordered" evidence="2">
    <location>
        <begin position="163"/>
        <end position="186"/>
    </location>
</feature>
<accession>Q9LVU3</accession>
<accession>A0MFM8</accession>